<dbReference type="EC" id="1.3.1.44" evidence="1"/>
<dbReference type="EMBL" id="CP000312">
    <property type="protein sequence ID" value="ABG87040.1"/>
    <property type="molecule type" value="Genomic_DNA"/>
</dbReference>
<dbReference type="RefSeq" id="WP_011592892.1">
    <property type="nucleotide sequence ID" value="NC_008262.1"/>
</dbReference>
<dbReference type="SMR" id="Q0SRA3"/>
<dbReference type="KEGG" id="cpr:CPR_2045"/>
<dbReference type="UniPathway" id="UPA00094"/>
<dbReference type="Proteomes" id="UP000001824">
    <property type="component" value="Chromosome"/>
</dbReference>
<dbReference type="GO" id="GO:0004318">
    <property type="term" value="F:enoyl-[acyl-carrier-protein] reductase (NADH) activity"/>
    <property type="evidence" value="ECO:0007669"/>
    <property type="project" value="TreeGrafter"/>
</dbReference>
<dbReference type="GO" id="GO:0051287">
    <property type="term" value="F:NAD binding"/>
    <property type="evidence" value="ECO:0007669"/>
    <property type="project" value="UniProtKB-UniRule"/>
</dbReference>
<dbReference type="GO" id="GO:0050343">
    <property type="term" value="F:trans-2-enoyl-CoA reductase (NADH) activity"/>
    <property type="evidence" value="ECO:0007669"/>
    <property type="project" value="UniProtKB-UniRule"/>
</dbReference>
<dbReference type="GO" id="GO:0006633">
    <property type="term" value="P:fatty acid biosynthetic process"/>
    <property type="evidence" value="ECO:0007669"/>
    <property type="project" value="UniProtKB-UniRule"/>
</dbReference>
<dbReference type="Gene3D" id="3.40.50.720">
    <property type="entry name" value="NAD(P)-binding Rossmann-like Domain"/>
    <property type="match status" value="1"/>
</dbReference>
<dbReference type="HAMAP" id="MF_01838">
    <property type="entry name" value="FabV_reductase"/>
    <property type="match status" value="1"/>
</dbReference>
<dbReference type="InterPro" id="IPR024906">
    <property type="entry name" value="Eno_Rdtase_FAD-bd_dom"/>
</dbReference>
<dbReference type="InterPro" id="IPR024910">
    <property type="entry name" value="Enoyl-CoA_Rdtase_cat_dom"/>
</dbReference>
<dbReference type="InterPro" id="IPR050048">
    <property type="entry name" value="FabV-like_NADH_b"/>
</dbReference>
<dbReference type="InterPro" id="IPR036291">
    <property type="entry name" value="NAD(P)-bd_dom_sf"/>
</dbReference>
<dbReference type="InterPro" id="IPR010758">
    <property type="entry name" value="Trans-2-enoyl-CoA_reductase"/>
</dbReference>
<dbReference type="NCBIfam" id="NF043048">
    <property type="entry name" value="EnoyACPredFabV"/>
    <property type="match status" value="1"/>
</dbReference>
<dbReference type="NCBIfam" id="NF010177">
    <property type="entry name" value="PRK13656.1"/>
    <property type="match status" value="1"/>
</dbReference>
<dbReference type="PANTHER" id="PTHR37480">
    <property type="entry name" value="ENOYL-[ACYL-CARRIER-PROTEIN] REDUCTASE [NADH]"/>
    <property type="match status" value="1"/>
</dbReference>
<dbReference type="PANTHER" id="PTHR37480:SF1">
    <property type="entry name" value="ENOYL-[ACYL-CARRIER-PROTEIN] REDUCTASE [NADH]"/>
    <property type="match status" value="1"/>
</dbReference>
<dbReference type="Pfam" id="PF07055">
    <property type="entry name" value="Eno-Rase_FAD_bd"/>
    <property type="match status" value="1"/>
</dbReference>
<dbReference type="Pfam" id="PF12242">
    <property type="entry name" value="Eno-Rase_NADH_b"/>
    <property type="match status" value="1"/>
</dbReference>
<dbReference type="Pfam" id="PF12241">
    <property type="entry name" value="Enoyl_reductase"/>
    <property type="match status" value="1"/>
</dbReference>
<dbReference type="SUPFAM" id="SSF51735">
    <property type="entry name" value="NAD(P)-binding Rossmann-fold domains"/>
    <property type="match status" value="1"/>
</dbReference>
<organism>
    <name type="scientific">Clostridium perfringens (strain SM101 / Type A)</name>
    <dbReference type="NCBI Taxonomy" id="289380"/>
    <lineage>
        <taxon>Bacteria</taxon>
        <taxon>Bacillati</taxon>
        <taxon>Bacillota</taxon>
        <taxon>Clostridia</taxon>
        <taxon>Eubacteriales</taxon>
        <taxon>Clostridiaceae</taxon>
        <taxon>Clostridium</taxon>
    </lineage>
</organism>
<gene>
    <name evidence="1" type="primary">fabV</name>
    <name type="ordered locus">CPR_2045</name>
</gene>
<proteinExistence type="inferred from homology"/>
<name>FABV_CLOPS</name>
<keyword id="KW-0275">Fatty acid biosynthesis</keyword>
<keyword id="KW-0276">Fatty acid metabolism</keyword>
<keyword id="KW-0444">Lipid biosynthesis</keyword>
<keyword id="KW-0443">Lipid metabolism</keyword>
<keyword id="KW-0520">NAD</keyword>
<keyword id="KW-0560">Oxidoreductase</keyword>
<protein>
    <recommendedName>
        <fullName evidence="1">Trans-2-enoyl-CoA reductase [NADH]</fullName>
        <shortName evidence="1">TER</shortName>
        <ecNumber evidence="1">1.3.1.44</ecNumber>
    </recommendedName>
</protein>
<accession>Q0SRA3</accession>
<reference key="1">
    <citation type="journal article" date="2006" name="Genome Res.">
        <title>Skewed genomic variability in strains of the toxigenic bacterial pathogen, Clostridium perfringens.</title>
        <authorList>
            <person name="Myers G.S.A."/>
            <person name="Rasko D.A."/>
            <person name="Cheung J.K."/>
            <person name="Ravel J."/>
            <person name="Seshadri R."/>
            <person name="DeBoy R.T."/>
            <person name="Ren Q."/>
            <person name="Varga J."/>
            <person name="Awad M.M."/>
            <person name="Brinkac L.M."/>
            <person name="Daugherty S.C."/>
            <person name="Haft D.H."/>
            <person name="Dodson R.J."/>
            <person name="Madupu R."/>
            <person name="Nelson W.C."/>
            <person name="Rosovitz M.J."/>
            <person name="Sullivan S.A."/>
            <person name="Khouri H."/>
            <person name="Dimitrov G.I."/>
            <person name="Watkins K.L."/>
            <person name="Mulligan S."/>
            <person name="Benton J."/>
            <person name="Radune D."/>
            <person name="Fisher D.J."/>
            <person name="Atkins H.S."/>
            <person name="Hiscox T."/>
            <person name="Jost B.H."/>
            <person name="Billington S.J."/>
            <person name="Songer J.G."/>
            <person name="McClane B.A."/>
            <person name="Titball R.W."/>
            <person name="Rood J.I."/>
            <person name="Melville S.B."/>
            <person name="Paulsen I.T."/>
        </authorList>
    </citation>
    <scope>NUCLEOTIDE SEQUENCE [LARGE SCALE GENOMIC DNA]</scope>
    <source>
        <strain>SM101 / Type A</strain>
    </source>
</reference>
<comment type="function">
    <text evidence="1">Involved in the fatty acid synthesis (FAS II). Catalyzes the reduction of a carbon-carbon double bond in an enoyl moiety that is covalently linked to a coenzyme A (CoA).</text>
</comment>
<comment type="catalytic activity">
    <reaction evidence="1">
        <text>a 2,3-saturated acyl-CoA + NAD(+) = a (2E)-enoyl-CoA + NADH + H(+)</text>
        <dbReference type="Rhea" id="RHEA:18177"/>
        <dbReference type="ChEBI" id="CHEBI:15378"/>
        <dbReference type="ChEBI" id="CHEBI:57540"/>
        <dbReference type="ChEBI" id="CHEBI:57945"/>
        <dbReference type="ChEBI" id="CHEBI:58856"/>
        <dbReference type="ChEBI" id="CHEBI:65111"/>
        <dbReference type="EC" id="1.3.1.44"/>
    </reaction>
</comment>
<comment type="pathway">
    <text evidence="1">Lipid metabolism; fatty acid biosynthesis.</text>
</comment>
<comment type="subunit">
    <text evidence="1">Monomer.</text>
</comment>
<comment type="similarity">
    <text evidence="1">Belongs to the TER reductase family.</text>
</comment>
<sequence>MIVEPKFRGFICTTSHPIGCKKNVENQIEYVKENGKIEGAKRVLVLGASTGYGLASAIVASEACDAEVLGVSFEREAKGKRTASAGWYNIESLKKFVEGEGKKFISVNGDAFSNEVKSEVIDLIKENMGKVDLVIYSLAAPKRKDPVSGEVYSSCLKTVGAPFTSKTLDFHTGEIQDITINPATEEEIEGTRKVMGGEDWMLWIEALKEANVLENGVKTIAYSYIGPEVTYPIYREGTIGRAKNDLEKTAGEITKVLKSLNGEGYISVNKALVTQASSAIPIVSLYISILYKVMKEKGTHEGCIEQIYRMFKELYEGNLNLDSENRIRIDDLEMAEDVQKAIEEIWPQITSENVFELSDAEDFKKEFFKLFGFGLEGVDYSEDVDITTV</sequence>
<feature type="chain" id="PRO_1000070481" description="Trans-2-enoyl-CoA reductase [NADH]">
    <location>
        <begin position="1"/>
        <end position="389"/>
    </location>
</feature>
<feature type="active site" description="Proton donor" evidence="1">
    <location>
        <position position="234"/>
    </location>
</feature>
<feature type="binding site" evidence="1">
    <location>
        <begin position="47"/>
        <end position="52"/>
    </location>
    <ligand>
        <name>NAD(+)</name>
        <dbReference type="ChEBI" id="CHEBI:57540"/>
    </ligand>
</feature>
<feature type="binding site" evidence="1">
    <location>
        <begin position="73"/>
        <end position="74"/>
    </location>
    <ligand>
        <name>NAD(+)</name>
        <dbReference type="ChEBI" id="CHEBI:57540"/>
    </ligand>
</feature>
<feature type="binding site" evidence="1">
    <location>
        <begin position="110"/>
        <end position="111"/>
    </location>
    <ligand>
        <name>NAD(+)</name>
        <dbReference type="ChEBI" id="CHEBI:57540"/>
    </ligand>
</feature>
<feature type="binding site" evidence="1">
    <location>
        <begin position="138"/>
        <end position="139"/>
    </location>
    <ligand>
        <name>NAD(+)</name>
        <dbReference type="ChEBI" id="CHEBI:57540"/>
    </ligand>
</feature>
<feature type="binding site" evidence="1">
    <location>
        <position position="224"/>
    </location>
    <ligand>
        <name>substrate</name>
    </ligand>
</feature>
<feature type="binding site" evidence="1">
    <location>
        <position position="243"/>
    </location>
    <ligand>
        <name>NAD(+)</name>
        <dbReference type="ChEBI" id="CHEBI:57540"/>
    </ligand>
</feature>
<feature type="binding site" evidence="1">
    <location>
        <begin position="272"/>
        <end position="274"/>
    </location>
    <ligand>
        <name>NAD(+)</name>
        <dbReference type="ChEBI" id="CHEBI:57540"/>
    </ligand>
</feature>
<feature type="site" description="Plays an important role in discriminating NADH against NADPH" evidence="1">
    <location>
        <position position="74"/>
    </location>
</feature>
<evidence type="ECO:0000255" key="1">
    <source>
        <dbReference type="HAMAP-Rule" id="MF_01838"/>
    </source>
</evidence>